<reference key="1">
    <citation type="journal article" date="2004" name="Nat. Biotechnol.">
        <title>Complete sequence and comparative genome analysis of the dairy bacterium Streptococcus thermophilus.</title>
        <authorList>
            <person name="Bolotin A."/>
            <person name="Quinquis B."/>
            <person name="Renault P."/>
            <person name="Sorokin A."/>
            <person name="Ehrlich S.D."/>
            <person name="Kulakauskas S."/>
            <person name="Lapidus A."/>
            <person name="Goltsman E."/>
            <person name="Mazur M."/>
            <person name="Pusch G.D."/>
            <person name="Fonstein M."/>
            <person name="Overbeek R."/>
            <person name="Kyprides N."/>
            <person name="Purnelle B."/>
            <person name="Prozzi D."/>
            <person name="Ngui K."/>
            <person name="Masuy D."/>
            <person name="Hancy F."/>
            <person name="Burteau S."/>
            <person name="Boutry M."/>
            <person name="Delcour J."/>
            <person name="Goffeau A."/>
            <person name="Hols P."/>
        </authorList>
    </citation>
    <scope>NUCLEOTIDE SEQUENCE [LARGE SCALE GENOMIC DNA]</scope>
    <source>
        <strain>ATCC BAA-250 / LMG 18311</strain>
    </source>
</reference>
<evidence type="ECO:0000255" key="1">
    <source>
        <dbReference type="HAMAP-Rule" id="MF_00551"/>
    </source>
</evidence>
<protein>
    <recommendedName>
        <fullName evidence="1">Uridine kinase</fullName>
        <ecNumber evidence="1">2.7.1.48</ecNumber>
    </recommendedName>
    <alternativeName>
        <fullName evidence="1">Cytidine monophosphokinase</fullName>
    </alternativeName>
    <alternativeName>
        <fullName evidence="1">Uridine monophosphokinase</fullName>
    </alternativeName>
</protein>
<name>URK_STRT2</name>
<proteinExistence type="inferred from homology"/>
<comment type="catalytic activity">
    <reaction evidence="1">
        <text>uridine + ATP = UMP + ADP + H(+)</text>
        <dbReference type="Rhea" id="RHEA:16825"/>
        <dbReference type="ChEBI" id="CHEBI:15378"/>
        <dbReference type="ChEBI" id="CHEBI:16704"/>
        <dbReference type="ChEBI" id="CHEBI:30616"/>
        <dbReference type="ChEBI" id="CHEBI:57865"/>
        <dbReference type="ChEBI" id="CHEBI:456216"/>
        <dbReference type="EC" id="2.7.1.48"/>
    </reaction>
</comment>
<comment type="catalytic activity">
    <reaction evidence="1">
        <text>cytidine + ATP = CMP + ADP + H(+)</text>
        <dbReference type="Rhea" id="RHEA:24674"/>
        <dbReference type="ChEBI" id="CHEBI:15378"/>
        <dbReference type="ChEBI" id="CHEBI:17562"/>
        <dbReference type="ChEBI" id="CHEBI:30616"/>
        <dbReference type="ChEBI" id="CHEBI:60377"/>
        <dbReference type="ChEBI" id="CHEBI:456216"/>
        <dbReference type="EC" id="2.7.1.48"/>
    </reaction>
</comment>
<comment type="pathway">
    <text evidence="1">Pyrimidine metabolism; CTP biosynthesis via salvage pathway; CTP from cytidine: step 1/3.</text>
</comment>
<comment type="pathway">
    <text evidence="1">Pyrimidine metabolism; UMP biosynthesis via salvage pathway; UMP from uridine: step 1/1.</text>
</comment>
<comment type="subcellular location">
    <subcellularLocation>
        <location evidence="1">Cytoplasm</location>
    </subcellularLocation>
</comment>
<comment type="similarity">
    <text evidence="1">Belongs to the uridine kinase family.</text>
</comment>
<accession>Q5M3V0</accession>
<gene>
    <name evidence="1" type="primary">udk</name>
    <name type="ordered locus">stu1260</name>
</gene>
<keyword id="KW-0067">ATP-binding</keyword>
<keyword id="KW-0963">Cytoplasm</keyword>
<keyword id="KW-0418">Kinase</keyword>
<keyword id="KW-0547">Nucleotide-binding</keyword>
<keyword id="KW-1185">Reference proteome</keyword>
<keyword id="KW-0808">Transferase</keyword>
<organism>
    <name type="scientific">Streptococcus thermophilus (strain ATCC BAA-250 / LMG 18311)</name>
    <dbReference type="NCBI Taxonomy" id="264199"/>
    <lineage>
        <taxon>Bacteria</taxon>
        <taxon>Bacillati</taxon>
        <taxon>Bacillota</taxon>
        <taxon>Bacilli</taxon>
        <taxon>Lactobacillales</taxon>
        <taxon>Streptococcaceae</taxon>
        <taxon>Streptococcus</taxon>
    </lineage>
</organism>
<sequence length="211" mass="24246">MPKKPIIIGVTGGSGGGKTSVSRAILSNFPDEKIAMIEHDSYYKDQSHLTFEERVSTNYDHPFAFDTDLMIEHINELIAGRPVDIPIYDYTQHTRSNKTYRQEPQDVFIVEGILVLEDKRLRDLMDIKLFVDTDDDIRIIRRIKRDMEERGRSLDSIIDQYNSVVKPMYHQFIEPTKRYADVVIPEGVSNTVAIDLINTKVASILEESKKA</sequence>
<feature type="chain" id="PRO_1000017911" description="Uridine kinase">
    <location>
        <begin position="1"/>
        <end position="211"/>
    </location>
</feature>
<feature type="binding site" evidence="1">
    <location>
        <begin position="12"/>
        <end position="19"/>
    </location>
    <ligand>
        <name>ATP</name>
        <dbReference type="ChEBI" id="CHEBI:30616"/>
    </ligand>
</feature>
<dbReference type="EC" id="2.7.1.48" evidence="1"/>
<dbReference type="EMBL" id="CP000023">
    <property type="protein sequence ID" value="AAV60893.1"/>
    <property type="molecule type" value="Genomic_DNA"/>
</dbReference>
<dbReference type="RefSeq" id="WP_002946476.1">
    <property type="nucleotide sequence ID" value="NC_006448.1"/>
</dbReference>
<dbReference type="SMR" id="Q5M3V0"/>
<dbReference type="STRING" id="264199.stu1260"/>
<dbReference type="GeneID" id="66899049"/>
<dbReference type="KEGG" id="stl:stu1260"/>
<dbReference type="eggNOG" id="COG0572">
    <property type="taxonomic scope" value="Bacteria"/>
</dbReference>
<dbReference type="HOGENOM" id="CLU_021278_1_2_9"/>
<dbReference type="UniPathway" id="UPA00574">
    <property type="reaction ID" value="UER00637"/>
</dbReference>
<dbReference type="UniPathway" id="UPA00579">
    <property type="reaction ID" value="UER00640"/>
</dbReference>
<dbReference type="Proteomes" id="UP000001170">
    <property type="component" value="Chromosome"/>
</dbReference>
<dbReference type="GO" id="GO:0005737">
    <property type="term" value="C:cytoplasm"/>
    <property type="evidence" value="ECO:0007669"/>
    <property type="project" value="UniProtKB-SubCell"/>
</dbReference>
<dbReference type="GO" id="GO:0005524">
    <property type="term" value="F:ATP binding"/>
    <property type="evidence" value="ECO:0007669"/>
    <property type="project" value="UniProtKB-UniRule"/>
</dbReference>
<dbReference type="GO" id="GO:0043771">
    <property type="term" value="F:cytidine kinase activity"/>
    <property type="evidence" value="ECO:0007669"/>
    <property type="project" value="RHEA"/>
</dbReference>
<dbReference type="GO" id="GO:0004849">
    <property type="term" value="F:uridine kinase activity"/>
    <property type="evidence" value="ECO:0007669"/>
    <property type="project" value="UniProtKB-UniRule"/>
</dbReference>
<dbReference type="GO" id="GO:0044211">
    <property type="term" value="P:CTP salvage"/>
    <property type="evidence" value="ECO:0007669"/>
    <property type="project" value="UniProtKB-UniRule"/>
</dbReference>
<dbReference type="GO" id="GO:0044206">
    <property type="term" value="P:UMP salvage"/>
    <property type="evidence" value="ECO:0007669"/>
    <property type="project" value="UniProtKB-UniRule"/>
</dbReference>
<dbReference type="CDD" id="cd02023">
    <property type="entry name" value="UMPK"/>
    <property type="match status" value="1"/>
</dbReference>
<dbReference type="Gene3D" id="3.40.50.300">
    <property type="entry name" value="P-loop containing nucleotide triphosphate hydrolases"/>
    <property type="match status" value="1"/>
</dbReference>
<dbReference type="HAMAP" id="MF_00551">
    <property type="entry name" value="Uridine_kinase"/>
    <property type="match status" value="1"/>
</dbReference>
<dbReference type="InterPro" id="IPR027417">
    <property type="entry name" value="P-loop_NTPase"/>
</dbReference>
<dbReference type="InterPro" id="IPR006083">
    <property type="entry name" value="PRK/URK"/>
</dbReference>
<dbReference type="InterPro" id="IPR026008">
    <property type="entry name" value="Uridine_kinase"/>
</dbReference>
<dbReference type="InterPro" id="IPR000764">
    <property type="entry name" value="Uridine_kinase-like"/>
</dbReference>
<dbReference type="NCBIfam" id="NF004018">
    <property type="entry name" value="PRK05480.1"/>
    <property type="match status" value="1"/>
</dbReference>
<dbReference type="NCBIfam" id="TIGR00235">
    <property type="entry name" value="udk"/>
    <property type="match status" value="1"/>
</dbReference>
<dbReference type="PANTHER" id="PTHR10285">
    <property type="entry name" value="URIDINE KINASE"/>
    <property type="match status" value="1"/>
</dbReference>
<dbReference type="Pfam" id="PF00485">
    <property type="entry name" value="PRK"/>
    <property type="match status" value="1"/>
</dbReference>
<dbReference type="PRINTS" id="PR00988">
    <property type="entry name" value="URIDINKINASE"/>
</dbReference>
<dbReference type="SUPFAM" id="SSF52540">
    <property type="entry name" value="P-loop containing nucleoside triphosphate hydrolases"/>
    <property type="match status" value="1"/>
</dbReference>